<accession>Q0TA22</accession>
<dbReference type="EC" id="2.5.1.39" evidence="1"/>
<dbReference type="EMBL" id="CP000247">
    <property type="protein sequence ID" value="ABG72207.1"/>
    <property type="molecule type" value="Genomic_DNA"/>
</dbReference>
<dbReference type="RefSeq" id="WP_000455227.1">
    <property type="nucleotide sequence ID" value="NC_008253.1"/>
</dbReference>
<dbReference type="SMR" id="Q0TA22"/>
<dbReference type="GeneID" id="93777791"/>
<dbReference type="KEGG" id="ecp:ECP_4257"/>
<dbReference type="HOGENOM" id="CLU_034879_1_0_6"/>
<dbReference type="UniPathway" id="UPA00232"/>
<dbReference type="Proteomes" id="UP000009182">
    <property type="component" value="Chromosome"/>
</dbReference>
<dbReference type="GO" id="GO:0005886">
    <property type="term" value="C:plasma membrane"/>
    <property type="evidence" value="ECO:0007669"/>
    <property type="project" value="UniProtKB-SubCell"/>
</dbReference>
<dbReference type="GO" id="GO:0008412">
    <property type="term" value="F:4-hydroxybenzoate polyprenyltransferase activity"/>
    <property type="evidence" value="ECO:0007669"/>
    <property type="project" value="UniProtKB-UniRule"/>
</dbReference>
<dbReference type="GO" id="GO:0006744">
    <property type="term" value="P:ubiquinone biosynthetic process"/>
    <property type="evidence" value="ECO:0007669"/>
    <property type="project" value="UniProtKB-UniRule"/>
</dbReference>
<dbReference type="CDD" id="cd13959">
    <property type="entry name" value="PT_UbiA_COQ2"/>
    <property type="match status" value="1"/>
</dbReference>
<dbReference type="FunFam" id="1.10.357.140:FF:000002">
    <property type="entry name" value="4-hydroxybenzoate octaprenyltransferase"/>
    <property type="match status" value="1"/>
</dbReference>
<dbReference type="FunFam" id="1.20.120.1780:FF:000001">
    <property type="entry name" value="4-hydroxybenzoate octaprenyltransferase"/>
    <property type="match status" value="1"/>
</dbReference>
<dbReference type="Gene3D" id="1.10.357.140">
    <property type="entry name" value="UbiA prenyltransferase"/>
    <property type="match status" value="1"/>
</dbReference>
<dbReference type="Gene3D" id="1.20.120.1780">
    <property type="entry name" value="UbiA prenyltransferase"/>
    <property type="match status" value="1"/>
</dbReference>
<dbReference type="HAMAP" id="MF_01635">
    <property type="entry name" value="UbiA"/>
    <property type="match status" value="1"/>
</dbReference>
<dbReference type="InterPro" id="IPR006370">
    <property type="entry name" value="HB_polyprenyltransferase-like"/>
</dbReference>
<dbReference type="InterPro" id="IPR039653">
    <property type="entry name" value="Prenyltransferase"/>
</dbReference>
<dbReference type="InterPro" id="IPR000537">
    <property type="entry name" value="UbiA_prenyltransferase"/>
</dbReference>
<dbReference type="InterPro" id="IPR030470">
    <property type="entry name" value="UbiA_prenylTrfase_CS"/>
</dbReference>
<dbReference type="InterPro" id="IPR044878">
    <property type="entry name" value="UbiA_sf"/>
</dbReference>
<dbReference type="NCBIfam" id="TIGR01474">
    <property type="entry name" value="ubiA_proteo"/>
    <property type="match status" value="1"/>
</dbReference>
<dbReference type="PANTHER" id="PTHR11048:SF28">
    <property type="entry name" value="4-HYDROXYBENZOATE POLYPRENYLTRANSFERASE, MITOCHONDRIAL"/>
    <property type="match status" value="1"/>
</dbReference>
<dbReference type="PANTHER" id="PTHR11048">
    <property type="entry name" value="PRENYLTRANSFERASES"/>
    <property type="match status" value="1"/>
</dbReference>
<dbReference type="Pfam" id="PF01040">
    <property type="entry name" value="UbiA"/>
    <property type="match status" value="1"/>
</dbReference>
<dbReference type="PROSITE" id="PS00943">
    <property type="entry name" value="UBIA"/>
    <property type="match status" value="1"/>
</dbReference>
<comment type="function">
    <text evidence="1">Catalyzes the prenylation of para-hydroxybenzoate (PHB) with an all-trans polyprenyl group. Mediates the second step in the final reaction sequence of ubiquinone-8 (UQ-8) biosynthesis, which is the condensation of the polyisoprenoid side chain with PHB, generating the first membrane-bound Q intermediate 3-octaprenyl-4-hydroxybenzoate.</text>
</comment>
<comment type="catalytic activity">
    <reaction evidence="1">
        <text>all-trans-octaprenyl diphosphate + 4-hydroxybenzoate = 4-hydroxy-3-(all-trans-octaprenyl)benzoate + diphosphate</text>
        <dbReference type="Rhea" id="RHEA:27782"/>
        <dbReference type="ChEBI" id="CHEBI:1617"/>
        <dbReference type="ChEBI" id="CHEBI:17879"/>
        <dbReference type="ChEBI" id="CHEBI:33019"/>
        <dbReference type="ChEBI" id="CHEBI:57711"/>
        <dbReference type="EC" id="2.5.1.39"/>
    </reaction>
</comment>
<comment type="cofactor">
    <cofactor evidence="1">
        <name>Mg(2+)</name>
        <dbReference type="ChEBI" id="CHEBI:18420"/>
    </cofactor>
</comment>
<comment type="pathway">
    <text evidence="1">Cofactor biosynthesis; ubiquinone biosynthesis.</text>
</comment>
<comment type="subcellular location">
    <subcellularLocation>
        <location evidence="1">Cell inner membrane</location>
        <topology evidence="1">Multi-pass membrane protein</topology>
    </subcellularLocation>
</comment>
<comment type="similarity">
    <text evidence="1">Belongs to the UbiA prenyltransferase family.</text>
</comment>
<keyword id="KW-0997">Cell inner membrane</keyword>
<keyword id="KW-1003">Cell membrane</keyword>
<keyword id="KW-0460">Magnesium</keyword>
<keyword id="KW-0472">Membrane</keyword>
<keyword id="KW-0808">Transferase</keyword>
<keyword id="KW-0812">Transmembrane</keyword>
<keyword id="KW-1133">Transmembrane helix</keyword>
<keyword id="KW-0831">Ubiquinone biosynthesis</keyword>
<sequence length="290" mass="32512">MEWSLTQNKLLAFHRLMRTDKPIGALLLLWPTLWALWVATPGVPQLWILAVFVAGVWLMRAAGCVVNDYADRKFDGHVKRTANRPLPSGAVTEKEARALFVVLVLISFLLVLTLNTMTILLSIAALALAWVYPFMKRYTHLPQVVLGAAFGWSIPMAFAAVSESVPLSCWLMFLANILWAVAYDTQYAMVDRDDDVKIGIKSTAILFGQYDKLIIGILQIGVLALMAIIGELNGLGWGYYWSILVAGALFVYQQKLIANREREACFKAFMNNNYVGLVLFLGLAMSYWHF</sequence>
<proteinExistence type="inferred from homology"/>
<gene>
    <name evidence="1" type="primary">ubiA</name>
    <name type="ordered locus">ECP_4257</name>
</gene>
<protein>
    <recommendedName>
        <fullName evidence="1">4-hydroxybenzoate octaprenyltransferase</fullName>
        <ecNumber evidence="1">2.5.1.39</ecNumber>
    </recommendedName>
    <alternativeName>
        <fullName evidence="1">4-HB polyprenyltransferase</fullName>
    </alternativeName>
</protein>
<name>UBIA_ECOL5</name>
<reference key="1">
    <citation type="journal article" date="2006" name="Mol. Microbiol.">
        <title>Role of pathogenicity island-associated integrases in the genome plasticity of uropathogenic Escherichia coli strain 536.</title>
        <authorList>
            <person name="Hochhut B."/>
            <person name="Wilde C."/>
            <person name="Balling G."/>
            <person name="Middendorf B."/>
            <person name="Dobrindt U."/>
            <person name="Brzuszkiewicz E."/>
            <person name="Gottschalk G."/>
            <person name="Carniel E."/>
            <person name="Hacker J."/>
        </authorList>
    </citation>
    <scope>NUCLEOTIDE SEQUENCE [LARGE SCALE GENOMIC DNA]</scope>
    <source>
        <strain>536 / UPEC</strain>
    </source>
</reference>
<organism>
    <name type="scientific">Escherichia coli O6:K15:H31 (strain 536 / UPEC)</name>
    <dbReference type="NCBI Taxonomy" id="362663"/>
    <lineage>
        <taxon>Bacteria</taxon>
        <taxon>Pseudomonadati</taxon>
        <taxon>Pseudomonadota</taxon>
        <taxon>Gammaproteobacteria</taxon>
        <taxon>Enterobacterales</taxon>
        <taxon>Enterobacteriaceae</taxon>
        <taxon>Escherichia</taxon>
    </lineage>
</organism>
<feature type="chain" id="PRO_0000262794" description="4-hydroxybenzoate octaprenyltransferase">
    <location>
        <begin position="1"/>
        <end position="290"/>
    </location>
</feature>
<feature type="transmembrane region" description="Helical" evidence="1">
    <location>
        <begin position="23"/>
        <end position="43"/>
    </location>
</feature>
<feature type="transmembrane region" description="Helical" evidence="1">
    <location>
        <begin position="46"/>
        <end position="66"/>
    </location>
</feature>
<feature type="transmembrane region" description="Helical" evidence="1">
    <location>
        <begin position="99"/>
        <end position="119"/>
    </location>
</feature>
<feature type="transmembrane region" description="Helical" evidence="1">
    <location>
        <begin position="141"/>
        <end position="161"/>
    </location>
</feature>
<feature type="transmembrane region" description="Helical" evidence="1">
    <location>
        <begin position="163"/>
        <end position="183"/>
    </location>
</feature>
<feature type="transmembrane region" description="Helical" evidence="1">
    <location>
        <begin position="213"/>
        <end position="233"/>
    </location>
</feature>
<feature type="transmembrane region" description="Helical" evidence="1">
    <location>
        <begin position="234"/>
        <end position="254"/>
    </location>
</feature>
<feature type="transmembrane region" description="Helical" evidence="1">
    <location>
        <begin position="268"/>
        <end position="288"/>
    </location>
</feature>
<evidence type="ECO:0000255" key="1">
    <source>
        <dbReference type="HAMAP-Rule" id="MF_01635"/>
    </source>
</evidence>